<evidence type="ECO:0000255" key="1">
    <source>
        <dbReference type="HAMAP-Rule" id="MF_00812"/>
    </source>
</evidence>
<protein>
    <recommendedName>
        <fullName evidence="1">Thiopurine S-methyltransferase</fullName>
        <ecNumber evidence="1">2.1.1.67</ecNumber>
    </recommendedName>
    <alternativeName>
        <fullName evidence="1">Thiopurine methyltransferase</fullName>
    </alternativeName>
</protein>
<organism>
    <name type="scientific">Shewanella baltica (strain OS155 / ATCC BAA-1091)</name>
    <dbReference type="NCBI Taxonomy" id="325240"/>
    <lineage>
        <taxon>Bacteria</taxon>
        <taxon>Pseudomonadati</taxon>
        <taxon>Pseudomonadota</taxon>
        <taxon>Gammaproteobacteria</taxon>
        <taxon>Alteromonadales</taxon>
        <taxon>Shewanellaceae</taxon>
        <taxon>Shewanella</taxon>
    </lineage>
</organism>
<gene>
    <name evidence="1" type="primary">tpm</name>
    <name type="ordered locus">Sbal_0541</name>
</gene>
<comment type="catalytic activity">
    <reaction evidence="1">
        <text>S-adenosyl-L-methionine + a thiopurine = S-adenosyl-L-homocysteine + a thiopurine S-methylether.</text>
        <dbReference type="EC" id="2.1.1.67"/>
    </reaction>
</comment>
<comment type="subcellular location">
    <subcellularLocation>
        <location evidence="1">Cytoplasm</location>
    </subcellularLocation>
</comment>
<comment type="similarity">
    <text evidence="1">Belongs to the class I-like SAM-binding methyltransferase superfamily. TPMT family.</text>
</comment>
<feature type="chain" id="PRO_1000047217" description="Thiopurine S-methyltransferase">
    <location>
        <begin position="1"/>
        <end position="218"/>
    </location>
</feature>
<feature type="binding site" evidence="1">
    <location>
        <position position="10"/>
    </location>
    <ligand>
        <name>S-adenosyl-L-methionine</name>
        <dbReference type="ChEBI" id="CHEBI:59789"/>
    </ligand>
</feature>
<feature type="binding site" evidence="1">
    <location>
        <position position="45"/>
    </location>
    <ligand>
        <name>S-adenosyl-L-methionine</name>
        <dbReference type="ChEBI" id="CHEBI:59789"/>
    </ligand>
</feature>
<feature type="binding site" evidence="1">
    <location>
        <position position="66"/>
    </location>
    <ligand>
        <name>S-adenosyl-L-methionine</name>
        <dbReference type="ChEBI" id="CHEBI:59789"/>
    </ligand>
</feature>
<feature type="binding site" evidence="1">
    <location>
        <position position="123"/>
    </location>
    <ligand>
        <name>S-adenosyl-L-methionine</name>
        <dbReference type="ChEBI" id="CHEBI:59789"/>
    </ligand>
</feature>
<dbReference type="EC" id="2.1.1.67" evidence="1"/>
<dbReference type="EMBL" id="CP000563">
    <property type="protein sequence ID" value="ABN60070.1"/>
    <property type="molecule type" value="Genomic_DNA"/>
</dbReference>
<dbReference type="RefSeq" id="WP_011845713.1">
    <property type="nucleotide sequence ID" value="NC_009052.1"/>
</dbReference>
<dbReference type="SMR" id="A3D007"/>
<dbReference type="STRING" id="325240.Sbal_0541"/>
<dbReference type="KEGG" id="sbl:Sbal_0541"/>
<dbReference type="HOGENOM" id="CLU_085515_1_0_6"/>
<dbReference type="OrthoDB" id="9778208at2"/>
<dbReference type="Proteomes" id="UP000001557">
    <property type="component" value="Chromosome"/>
</dbReference>
<dbReference type="GO" id="GO:0005737">
    <property type="term" value="C:cytoplasm"/>
    <property type="evidence" value="ECO:0007669"/>
    <property type="project" value="UniProtKB-SubCell"/>
</dbReference>
<dbReference type="GO" id="GO:0008119">
    <property type="term" value="F:thiopurine S-methyltransferase activity"/>
    <property type="evidence" value="ECO:0007669"/>
    <property type="project" value="UniProtKB-UniRule"/>
</dbReference>
<dbReference type="GO" id="GO:0032259">
    <property type="term" value="P:methylation"/>
    <property type="evidence" value="ECO:0007669"/>
    <property type="project" value="UniProtKB-KW"/>
</dbReference>
<dbReference type="GO" id="GO:0010038">
    <property type="term" value="P:response to metal ion"/>
    <property type="evidence" value="ECO:0007669"/>
    <property type="project" value="InterPro"/>
</dbReference>
<dbReference type="FunFam" id="3.40.50.150:FF:000101">
    <property type="entry name" value="Thiopurine S-methyltransferase"/>
    <property type="match status" value="1"/>
</dbReference>
<dbReference type="Gene3D" id="3.40.50.150">
    <property type="entry name" value="Vaccinia Virus protein VP39"/>
    <property type="match status" value="1"/>
</dbReference>
<dbReference type="HAMAP" id="MF_00812">
    <property type="entry name" value="Thiopur_methtran"/>
    <property type="match status" value="1"/>
</dbReference>
<dbReference type="InterPro" id="IPR029063">
    <property type="entry name" value="SAM-dependent_MTases_sf"/>
</dbReference>
<dbReference type="InterPro" id="IPR022474">
    <property type="entry name" value="Thiopur_S-MeTfrase_Se/Te_detox"/>
</dbReference>
<dbReference type="InterPro" id="IPR025835">
    <property type="entry name" value="Thiopurine_S-MeTrfase"/>
</dbReference>
<dbReference type="InterPro" id="IPR008854">
    <property type="entry name" value="TPMT"/>
</dbReference>
<dbReference type="NCBIfam" id="NF009732">
    <property type="entry name" value="PRK13255.1"/>
    <property type="match status" value="1"/>
</dbReference>
<dbReference type="NCBIfam" id="TIGR03840">
    <property type="entry name" value="TMPT_Se_Te"/>
    <property type="match status" value="1"/>
</dbReference>
<dbReference type="PANTHER" id="PTHR10259">
    <property type="entry name" value="THIOPURINE S-METHYLTRANSFERASE"/>
    <property type="match status" value="1"/>
</dbReference>
<dbReference type="PANTHER" id="PTHR10259:SF11">
    <property type="entry name" value="THIOPURINE S-METHYLTRANSFERASE"/>
    <property type="match status" value="1"/>
</dbReference>
<dbReference type="Pfam" id="PF05724">
    <property type="entry name" value="TPMT"/>
    <property type="match status" value="1"/>
</dbReference>
<dbReference type="PIRSF" id="PIRSF023956">
    <property type="entry name" value="Thiopurine_S-methyltransferase"/>
    <property type="match status" value="1"/>
</dbReference>
<dbReference type="SUPFAM" id="SSF53335">
    <property type="entry name" value="S-adenosyl-L-methionine-dependent methyltransferases"/>
    <property type="match status" value="1"/>
</dbReference>
<dbReference type="PROSITE" id="PS51585">
    <property type="entry name" value="SAM_MT_TPMT"/>
    <property type="match status" value="1"/>
</dbReference>
<sequence>MEPGFWHEKWHQQQIGFHQQDINPFLVKYWQQLGLPADTQVFVPLCGKSLDMCFLAEQGHQVIGCELNELAVQQFFSDNQLEMTQTTVGEHQHYQTEQISLYQGDIFTLPNAITQEVTAFYDRAALIAWPESMRAQYAKQLASLLPSGSVGLLVTLDYPQEALIGPPFAVSPTWVEQHLSDDFDIEVLASQDVLADNPRFIKKAVPWLNEAAYLLKRK</sequence>
<name>TPMT_SHEB5</name>
<accession>A3D007</accession>
<proteinExistence type="inferred from homology"/>
<keyword id="KW-0963">Cytoplasm</keyword>
<keyword id="KW-0489">Methyltransferase</keyword>
<keyword id="KW-1185">Reference proteome</keyword>
<keyword id="KW-0949">S-adenosyl-L-methionine</keyword>
<keyword id="KW-0808">Transferase</keyword>
<reference key="1">
    <citation type="submission" date="2007-02" db="EMBL/GenBank/DDBJ databases">
        <title>Complete sequence of chromosome of Shewanella baltica OS155.</title>
        <authorList>
            <consortium name="US DOE Joint Genome Institute"/>
            <person name="Copeland A."/>
            <person name="Lucas S."/>
            <person name="Lapidus A."/>
            <person name="Barry K."/>
            <person name="Detter J.C."/>
            <person name="Glavina del Rio T."/>
            <person name="Hammon N."/>
            <person name="Israni S."/>
            <person name="Dalin E."/>
            <person name="Tice H."/>
            <person name="Pitluck S."/>
            <person name="Sims D.R."/>
            <person name="Brettin T."/>
            <person name="Bruce D."/>
            <person name="Han C."/>
            <person name="Tapia R."/>
            <person name="Brainard J."/>
            <person name="Schmutz J."/>
            <person name="Larimer F."/>
            <person name="Land M."/>
            <person name="Hauser L."/>
            <person name="Kyrpides N."/>
            <person name="Mikhailova N."/>
            <person name="Brettar I."/>
            <person name="Klappenbach J."/>
            <person name="Konstantinidis K."/>
            <person name="Rodrigues J."/>
            <person name="Tiedje J."/>
            <person name="Richardson P."/>
        </authorList>
    </citation>
    <scope>NUCLEOTIDE SEQUENCE [LARGE SCALE GENOMIC DNA]</scope>
    <source>
        <strain>OS155 / ATCC BAA-1091</strain>
    </source>
</reference>